<reference key="1">
    <citation type="journal article" date="2002" name="Nucleic Acids Res.">
        <title>Genome sequence of Oceanobacillus iheyensis isolated from the Iheya Ridge and its unexpected adaptive capabilities to extreme environments.</title>
        <authorList>
            <person name="Takami H."/>
            <person name="Takaki Y."/>
            <person name="Uchiyama I."/>
        </authorList>
    </citation>
    <scope>NUCLEOTIDE SEQUENCE [LARGE SCALE GENOMIC DNA]</scope>
    <source>
        <strain>DSM 14371 / CIP 107618 / JCM 11309 / KCTC 3954 / HTE831</strain>
    </source>
</reference>
<feature type="chain" id="PRO_0000156771" description="Putative competence-damage inducible protein">
    <location>
        <begin position="1"/>
        <end position="417"/>
    </location>
</feature>
<name>CINA_OCEIH</name>
<sequence>MKNYQAEIVAVGTELLLGQIANTNAQWLSEKLATYGINMYNHTVVGDNLERVEQAFQLAQSRSNIIIVTGGLGPTADDLTREGFQQMTGLPLVEDKESMEKIEGFFQNRGRTMTPNNRKQARVFEGSTVLNNKAGMAPGMYVHYQSCHWFFLPGVPREMKHISQEELFPFLEKVTGKQRIIQSVVLKFIGIGESTLEHTLSDLIEKQTNPTIAPLAQDQAVVIRLTARGETKQEAEAMLEQTKKLILARVGEHYFGENEESIEDIVVQQLQDLGYSISAAESITGGMFSQRLVSVTGASNVFAGSFITYQSRIKEEVLEVPSEIIHSQGVVSRACSDAMASNVTRKIQTNLGISFTGIAGPDEQEGKPVGTVYISIADGDEVVVSKQFNFTGNRNHIRDRACLKGFELIYQYLKSKS</sequence>
<protein>
    <recommendedName>
        <fullName evidence="1">Putative competence-damage inducible protein</fullName>
    </recommendedName>
</protein>
<gene>
    <name evidence="1" type="primary">cinA</name>
    <name type="ordered locus">OB1623</name>
</gene>
<accession>Q8EQR8</accession>
<evidence type="ECO:0000255" key="1">
    <source>
        <dbReference type="HAMAP-Rule" id="MF_00226"/>
    </source>
</evidence>
<comment type="similarity">
    <text evidence="1">Belongs to the CinA family.</text>
</comment>
<dbReference type="EMBL" id="BA000028">
    <property type="protein sequence ID" value="BAC13579.1"/>
    <property type="molecule type" value="Genomic_DNA"/>
</dbReference>
<dbReference type="RefSeq" id="WP_011066023.1">
    <property type="nucleotide sequence ID" value="NC_004193.1"/>
</dbReference>
<dbReference type="SMR" id="Q8EQR8"/>
<dbReference type="STRING" id="221109.gene:10733863"/>
<dbReference type="KEGG" id="oih:OB1623"/>
<dbReference type="eggNOG" id="COG1058">
    <property type="taxonomic scope" value="Bacteria"/>
</dbReference>
<dbReference type="eggNOG" id="COG1546">
    <property type="taxonomic scope" value="Bacteria"/>
</dbReference>
<dbReference type="HOGENOM" id="CLU_030805_9_3_9"/>
<dbReference type="OrthoDB" id="9801454at2"/>
<dbReference type="PhylomeDB" id="Q8EQR8"/>
<dbReference type="BRENDA" id="3.5.1.42">
    <property type="organism ID" value="4380"/>
</dbReference>
<dbReference type="Proteomes" id="UP000000822">
    <property type="component" value="Chromosome"/>
</dbReference>
<dbReference type="CDD" id="cd00885">
    <property type="entry name" value="cinA"/>
    <property type="match status" value="1"/>
</dbReference>
<dbReference type="Gene3D" id="3.30.70.2860">
    <property type="match status" value="1"/>
</dbReference>
<dbReference type="Gene3D" id="3.90.950.20">
    <property type="entry name" value="CinA-like"/>
    <property type="match status" value="1"/>
</dbReference>
<dbReference type="Gene3D" id="3.40.980.10">
    <property type="entry name" value="MoaB/Mog-like domain"/>
    <property type="match status" value="1"/>
</dbReference>
<dbReference type="HAMAP" id="MF_00226_B">
    <property type="entry name" value="CinA_B"/>
    <property type="match status" value="1"/>
</dbReference>
<dbReference type="InterPro" id="IPR050101">
    <property type="entry name" value="CinA"/>
</dbReference>
<dbReference type="InterPro" id="IPR036653">
    <property type="entry name" value="CinA-like_C"/>
</dbReference>
<dbReference type="InterPro" id="IPR008136">
    <property type="entry name" value="CinA_C"/>
</dbReference>
<dbReference type="InterPro" id="IPR041424">
    <property type="entry name" value="CinA_KH"/>
</dbReference>
<dbReference type="InterPro" id="IPR008135">
    <property type="entry name" value="Competence-induced_CinA"/>
</dbReference>
<dbReference type="InterPro" id="IPR036425">
    <property type="entry name" value="MoaB/Mog-like_dom_sf"/>
</dbReference>
<dbReference type="InterPro" id="IPR001453">
    <property type="entry name" value="MoaB/Mog_dom"/>
</dbReference>
<dbReference type="NCBIfam" id="TIGR00200">
    <property type="entry name" value="cinA_nterm"/>
    <property type="match status" value="1"/>
</dbReference>
<dbReference type="NCBIfam" id="TIGR00177">
    <property type="entry name" value="molyb_syn"/>
    <property type="match status" value="1"/>
</dbReference>
<dbReference type="NCBIfam" id="TIGR00199">
    <property type="entry name" value="PncC_domain"/>
    <property type="match status" value="1"/>
</dbReference>
<dbReference type="NCBIfam" id="NF001813">
    <property type="entry name" value="PRK00549.1"/>
    <property type="match status" value="1"/>
</dbReference>
<dbReference type="PANTHER" id="PTHR13939">
    <property type="entry name" value="NICOTINAMIDE-NUCLEOTIDE AMIDOHYDROLASE PNCC"/>
    <property type="match status" value="1"/>
</dbReference>
<dbReference type="PANTHER" id="PTHR13939:SF0">
    <property type="entry name" value="NMN AMIDOHYDROLASE-LIKE PROTEIN YFAY"/>
    <property type="match status" value="1"/>
</dbReference>
<dbReference type="Pfam" id="PF02464">
    <property type="entry name" value="CinA"/>
    <property type="match status" value="1"/>
</dbReference>
<dbReference type="Pfam" id="PF18146">
    <property type="entry name" value="CinA_KH"/>
    <property type="match status" value="1"/>
</dbReference>
<dbReference type="Pfam" id="PF00994">
    <property type="entry name" value="MoCF_biosynth"/>
    <property type="match status" value="1"/>
</dbReference>
<dbReference type="PIRSF" id="PIRSF006728">
    <property type="entry name" value="CinA"/>
    <property type="match status" value="1"/>
</dbReference>
<dbReference type="SMART" id="SM00852">
    <property type="entry name" value="MoCF_biosynth"/>
    <property type="match status" value="1"/>
</dbReference>
<dbReference type="SUPFAM" id="SSF142433">
    <property type="entry name" value="CinA-like"/>
    <property type="match status" value="1"/>
</dbReference>
<dbReference type="SUPFAM" id="SSF53218">
    <property type="entry name" value="Molybdenum cofactor biosynthesis proteins"/>
    <property type="match status" value="1"/>
</dbReference>
<organism>
    <name type="scientific">Oceanobacillus iheyensis (strain DSM 14371 / CIP 107618 / JCM 11309 / KCTC 3954 / HTE831)</name>
    <dbReference type="NCBI Taxonomy" id="221109"/>
    <lineage>
        <taxon>Bacteria</taxon>
        <taxon>Bacillati</taxon>
        <taxon>Bacillota</taxon>
        <taxon>Bacilli</taxon>
        <taxon>Bacillales</taxon>
        <taxon>Bacillaceae</taxon>
        <taxon>Oceanobacillus</taxon>
    </lineage>
</organism>
<proteinExistence type="inferred from homology"/>
<keyword id="KW-1185">Reference proteome</keyword>